<gene>
    <name evidence="1" type="primary">gltX</name>
    <name type="ordered locus">LI0462</name>
</gene>
<dbReference type="EC" id="6.1.1.17" evidence="1"/>
<dbReference type="EMBL" id="AM180252">
    <property type="protein sequence ID" value="CAJ54516.1"/>
    <property type="molecule type" value="Genomic_DNA"/>
</dbReference>
<dbReference type="RefSeq" id="WP_011526546.1">
    <property type="nucleotide sequence ID" value="NC_008011.1"/>
</dbReference>
<dbReference type="SMR" id="Q1MR60"/>
<dbReference type="STRING" id="363253.LI0462"/>
<dbReference type="KEGG" id="lip:LI0462"/>
<dbReference type="eggNOG" id="COG0008">
    <property type="taxonomic scope" value="Bacteria"/>
</dbReference>
<dbReference type="HOGENOM" id="CLU_015768_6_3_7"/>
<dbReference type="OrthoDB" id="9807503at2"/>
<dbReference type="Proteomes" id="UP000002430">
    <property type="component" value="Chromosome"/>
</dbReference>
<dbReference type="GO" id="GO:0005829">
    <property type="term" value="C:cytosol"/>
    <property type="evidence" value="ECO:0007669"/>
    <property type="project" value="TreeGrafter"/>
</dbReference>
<dbReference type="GO" id="GO:0005524">
    <property type="term" value="F:ATP binding"/>
    <property type="evidence" value="ECO:0007669"/>
    <property type="project" value="UniProtKB-UniRule"/>
</dbReference>
<dbReference type="GO" id="GO:0004818">
    <property type="term" value="F:glutamate-tRNA ligase activity"/>
    <property type="evidence" value="ECO:0007669"/>
    <property type="project" value="UniProtKB-UniRule"/>
</dbReference>
<dbReference type="GO" id="GO:0000049">
    <property type="term" value="F:tRNA binding"/>
    <property type="evidence" value="ECO:0007669"/>
    <property type="project" value="InterPro"/>
</dbReference>
<dbReference type="GO" id="GO:0008270">
    <property type="term" value="F:zinc ion binding"/>
    <property type="evidence" value="ECO:0007669"/>
    <property type="project" value="UniProtKB-UniRule"/>
</dbReference>
<dbReference type="GO" id="GO:0006424">
    <property type="term" value="P:glutamyl-tRNA aminoacylation"/>
    <property type="evidence" value="ECO:0007669"/>
    <property type="project" value="UniProtKB-UniRule"/>
</dbReference>
<dbReference type="CDD" id="cd00808">
    <property type="entry name" value="GluRS_core"/>
    <property type="match status" value="1"/>
</dbReference>
<dbReference type="FunFam" id="3.40.50.620:FF:000007">
    <property type="entry name" value="Glutamate--tRNA ligase"/>
    <property type="match status" value="1"/>
</dbReference>
<dbReference type="Gene3D" id="1.10.10.350">
    <property type="match status" value="1"/>
</dbReference>
<dbReference type="Gene3D" id="3.40.50.620">
    <property type="entry name" value="HUPs"/>
    <property type="match status" value="1"/>
</dbReference>
<dbReference type="HAMAP" id="MF_00022">
    <property type="entry name" value="Glu_tRNA_synth_type1"/>
    <property type="match status" value="1"/>
</dbReference>
<dbReference type="InterPro" id="IPR045462">
    <property type="entry name" value="aa-tRNA-synth_I_cd-bd"/>
</dbReference>
<dbReference type="InterPro" id="IPR020751">
    <property type="entry name" value="aa-tRNA-synth_I_codon-bd_sub2"/>
</dbReference>
<dbReference type="InterPro" id="IPR001412">
    <property type="entry name" value="aa-tRNA-synth_I_CS"/>
</dbReference>
<dbReference type="InterPro" id="IPR008925">
    <property type="entry name" value="aa_tRNA-synth_I_cd-bd_sf"/>
</dbReference>
<dbReference type="InterPro" id="IPR004527">
    <property type="entry name" value="Glu-tRNA-ligase_bac/mito"/>
</dbReference>
<dbReference type="InterPro" id="IPR000924">
    <property type="entry name" value="Glu/Gln-tRNA-synth"/>
</dbReference>
<dbReference type="InterPro" id="IPR020058">
    <property type="entry name" value="Glu/Gln-tRNA-synth_Ib_cat-dom"/>
</dbReference>
<dbReference type="InterPro" id="IPR049940">
    <property type="entry name" value="GluQ/Sye"/>
</dbReference>
<dbReference type="InterPro" id="IPR033910">
    <property type="entry name" value="GluRS_core"/>
</dbReference>
<dbReference type="InterPro" id="IPR014729">
    <property type="entry name" value="Rossmann-like_a/b/a_fold"/>
</dbReference>
<dbReference type="NCBIfam" id="TIGR00464">
    <property type="entry name" value="gltX_bact"/>
    <property type="match status" value="1"/>
</dbReference>
<dbReference type="NCBIfam" id="NF004314">
    <property type="entry name" value="PRK05710.1-3"/>
    <property type="match status" value="1"/>
</dbReference>
<dbReference type="PANTHER" id="PTHR43311">
    <property type="entry name" value="GLUTAMATE--TRNA LIGASE"/>
    <property type="match status" value="1"/>
</dbReference>
<dbReference type="PANTHER" id="PTHR43311:SF2">
    <property type="entry name" value="GLUTAMATE--TRNA LIGASE, MITOCHONDRIAL-RELATED"/>
    <property type="match status" value="1"/>
</dbReference>
<dbReference type="Pfam" id="PF19269">
    <property type="entry name" value="Anticodon_2"/>
    <property type="match status" value="1"/>
</dbReference>
<dbReference type="Pfam" id="PF00749">
    <property type="entry name" value="tRNA-synt_1c"/>
    <property type="match status" value="1"/>
</dbReference>
<dbReference type="PRINTS" id="PR00987">
    <property type="entry name" value="TRNASYNTHGLU"/>
</dbReference>
<dbReference type="SUPFAM" id="SSF48163">
    <property type="entry name" value="An anticodon-binding domain of class I aminoacyl-tRNA synthetases"/>
    <property type="match status" value="1"/>
</dbReference>
<dbReference type="SUPFAM" id="SSF52374">
    <property type="entry name" value="Nucleotidylyl transferase"/>
    <property type="match status" value="1"/>
</dbReference>
<dbReference type="PROSITE" id="PS00178">
    <property type="entry name" value="AA_TRNA_LIGASE_I"/>
    <property type="match status" value="1"/>
</dbReference>
<organism>
    <name type="scientific">Lawsonia intracellularis (strain PHE/MN1-00)</name>
    <dbReference type="NCBI Taxonomy" id="363253"/>
    <lineage>
        <taxon>Bacteria</taxon>
        <taxon>Pseudomonadati</taxon>
        <taxon>Thermodesulfobacteriota</taxon>
        <taxon>Desulfovibrionia</taxon>
        <taxon>Desulfovibrionales</taxon>
        <taxon>Desulfovibrionaceae</taxon>
        <taxon>Lawsonia</taxon>
    </lineage>
</organism>
<feature type="chain" id="PRO_1000001916" description="Glutamate--tRNA ligase">
    <location>
        <begin position="1"/>
        <end position="465"/>
    </location>
</feature>
<feature type="short sequence motif" description="'HIGH' region" evidence="1">
    <location>
        <begin position="10"/>
        <end position="20"/>
    </location>
</feature>
<feature type="short sequence motif" description="'KMSKS' region" evidence="1">
    <location>
        <begin position="236"/>
        <end position="240"/>
    </location>
</feature>
<feature type="binding site" evidence="1">
    <location>
        <position position="99"/>
    </location>
    <ligand>
        <name>Zn(2+)</name>
        <dbReference type="ChEBI" id="CHEBI:29105"/>
    </ligand>
</feature>
<feature type="binding site" evidence="1">
    <location>
        <position position="101"/>
    </location>
    <ligand>
        <name>Zn(2+)</name>
        <dbReference type="ChEBI" id="CHEBI:29105"/>
    </ligand>
</feature>
<feature type="binding site" evidence="1">
    <location>
        <position position="126"/>
    </location>
    <ligand>
        <name>Zn(2+)</name>
        <dbReference type="ChEBI" id="CHEBI:29105"/>
    </ligand>
</feature>
<feature type="binding site" evidence="1">
    <location>
        <position position="128"/>
    </location>
    <ligand>
        <name>Zn(2+)</name>
        <dbReference type="ChEBI" id="CHEBI:29105"/>
    </ligand>
</feature>
<feature type="binding site" evidence="1">
    <location>
        <position position="239"/>
    </location>
    <ligand>
        <name>ATP</name>
        <dbReference type="ChEBI" id="CHEBI:30616"/>
    </ligand>
</feature>
<reference key="1">
    <citation type="submission" date="2005-11" db="EMBL/GenBank/DDBJ databases">
        <title>The complete genome sequence of Lawsonia intracellularis: the causative agent of proliferative enteropathy.</title>
        <authorList>
            <person name="Kaur K."/>
            <person name="Zhang Q."/>
            <person name="Beckler D."/>
            <person name="Munir S."/>
            <person name="Li L."/>
            <person name="Kinsley K."/>
            <person name="Herron L."/>
            <person name="Peterson A."/>
            <person name="May B."/>
            <person name="Singh S."/>
            <person name="Gebhart C."/>
            <person name="Kapur V."/>
        </authorList>
    </citation>
    <scope>NUCLEOTIDE SEQUENCE [LARGE SCALE GENOMIC DNA]</scope>
    <source>
        <strain>PHE/MN1-00</strain>
    </source>
</reference>
<evidence type="ECO:0000255" key="1">
    <source>
        <dbReference type="HAMAP-Rule" id="MF_00022"/>
    </source>
</evidence>
<accession>Q1MR60</accession>
<name>SYE_LAWIP</name>
<protein>
    <recommendedName>
        <fullName evidence="1">Glutamate--tRNA ligase</fullName>
        <ecNumber evidence="1">6.1.1.17</ecNumber>
    </recommendedName>
    <alternativeName>
        <fullName evidence="1">Glutamyl-tRNA synthetase</fullName>
        <shortName evidence="1">GluRS</shortName>
    </alternativeName>
</protein>
<comment type="function">
    <text evidence="1">Catalyzes the attachment of glutamate to tRNA(Glu) in a two-step reaction: glutamate is first activated by ATP to form Glu-AMP and then transferred to the acceptor end of tRNA(Glu).</text>
</comment>
<comment type="catalytic activity">
    <reaction evidence="1">
        <text>tRNA(Glu) + L-glutamate + ATP = L-glutamyl-tRNA(Glu) + AMP + diphosphate</text>
        <dbReference type="Rhea" id="RHEA:23540"/>
        <dbReference type="Rhea" id="RHEA-COMP:9663"/>
        <dbReference type="Rhea" id="RHEA-COMP:9680"/>
        <dbReference type="ChEBI" id="CHEBI:29985"/>
        <dbReference type="ChEBI" id="CHEBI:30616"/>
        <dbReference type="ChEBI" id="CHEBI:33019"/>
        <dbReference type="ChEBI" id="CHEBI:78442"/>
        <dbReference type="ChEBI" id="CHEBI:78520"/>
        <dbReference type="ChEBI" id="CHEBI:456215"/>
        <dbReference type="EC" id="6.1.1.17"/>
    </reaction>
</comment>
<comment type="cofactor">
    <cofactor evidence="1">
        <name>Zn(2+)</name>
        <dbReference type="ChEBI" id="CHEBI:29105"/>
    </cofactor>
    <text evidence="1">Binds 1 zinc ion per subunit.</text>
</comment>
<comment type="subunit">
    <text evidence="1">Monomer.</text>
</comment>
<comment type="subcellular location">
    <subcellularLocation>
        <location evidence="1">Cytoplasm</location>
    </subcellularLocation>
</comment>
<comment type="similarity">
    <text evidence="1">Belongs to the class-I aminoacyl-tRNA synthetase family. Glutamate--tRNA ligase type 1 subfamily.</text>
</comment>
<keyword id="KW-0030">Aminoacyl-tRNA synthetase</keyword>
<keyword id="KW-0067">ATP-binding</keyword>
<keyword id="KW-0963">Cytoplasm</keyword>
<keyword id="KW-0436">Ligase</keyword>
<keyword id="KW-0479">Metal-binding</keyword>
<keyword id="KW-0547">Nucleotide-binding</keyword>
<keyword id="KW-0648">Protein biosynthesis</keyword>
<keyword id="KW-1185">Reference proteome</keyword>
<keyword id="KW-0862">Zinc</keyword>
<proteinExistence type="inferred from homology"/>
<sequence>MKKVVTRFAPSPTGQLHIGGARTALFSWLLARHFDGIFHLRIEDTDLERSKQEYTDTILESMSWLGLNWDGEIVYQSKRNERYHEVIDILLQTGHAYWCHCSIEQIEKMREEARQKGEKPRYNGCCREKKLSANPSGVVRLKVPSAGQVTFNDLVKGQVTVQNTELDDMVLQRSDGTPTYQLAVVVDDHDMQVTHIIRGDDHVSNTPKQILIYNALGWEIPIFGHIPMILGSDRQKLSKRHGARAVIEYQEDGFLPEAMLNYLVRLGWSYGDQEIFTLQELISFFDGTNLHSAPAAFNIEKLLWLNAHYLRRLPVSQIANLMLPFVRKEGFTHITKERIEAVLPLYVERADTLKELVYLMKPVLISASDLTYKEDDIKKIVTNESKEHLDRLRNLLEAEINFEPLYIEQLIHEYITSNNLKFKEIGPILRLAVSGVLGGPSLQELIVVIGKKEVLARLDKLRFQL</sequence>